<comment type="function">
    <text>Directs the termination of nascent peptide synthesis (translation) in response to the termination codon UGA. In L.striatus UAA and UAG codes for glutamine.</text>
</comment>
<comment type="subunit">
    <text evidence="1">Heterodimer of two subunits, one of which binds GTP.</text>
</comment>
<comment type="subcellular location">
    <subcellularLocation>
        <location evidence="1">Cytoplasm</location>
    </subcellularLocation>
</comment>
<comment type="similarity">
    <text evidence="2">Belongs to the eukaryotic release factor 1 family.</text>
</comment>
<organism>
    <name type="scientific">Loxodes striatus</name>
    <dbReference type="NCBI Taxonomy" id="6009"/>
    <lineage>
        <taxon>Eukaryota</taxon>
        <taxon>Sar</taxon>
        <taxon>Alveolata</taxon>
        <taxon>Ciliophora</taxon>
        <taxon>Postciliodesmatophora</taxon>
        <taxon>Karyorelictea</taxon>
        <taxon>Loxodida</taxon>
        <taxon>Loxodidae</taxon>
        <taxon>Loxodes</taxon>
    </lineage>
</organism>
<keyword id="KW-0963">Cytoplasm</keyword>
<keyword id="KW-0648">Protein biosynthesis</keyword>
<evidence type="ECO:0000250" key="1"/>
<evidence type="ECO:0000305" key="2"/>
<accession>Q5CD84</accession>
<name>ERF1_LOXST</name>
<proteinExistence type="evidence at transcript level"/>
<feature type="chain" id="PRO_0000143155" description="Eukaryotic peptide chain release factor subunit 1">
    <location>
        <begin position="1"/>
        <end position="436"/>
    </location>
</feature>
<dbReference type="EMBL" id="AB105075">
    <property type="protein sequence ID" value="BAD90946.1"/>
    <property type="molecule type" value="mRNA"/>
</dbReference>
<dbReference type="SMR" id="Q5CD84"/>
<dbReference type="GO" id="GO:0005737">
    <property type="term" value="C:cytoplasm"/>
    <property type="evidence" value="ECO:0007669"/>
    <property type="project" value="UniProtKB-SubCell"/>
</dbReference>
<dbReference type="GO" id="GO:0003747">
    <property type="term" value="F:translation release factor activity"/>
    <property type="evidence" value="ECO:0007669"/>
    <property type="project" value="InterPro"/>
</dbReference>
<dbReference type="FunFam" id="3.30.1330.30:FF:000006">
    <property type="entry name" value="Peptide chain release factor subunit 1"/>
    <property type="match status" value="1"/>
</dbReference>
<dbReference type="FunFam" id="3.30.420.60:FF:000003">
    <property type="entry name" value="Peptide chain release factor subunit 1"/>
    <property type="match status" value="1"/>
</dbReference>
<dbReference type="Gene3D" id="3.30.1330.30">
    <property type="match status" value="1"/>
</dbReference>
<dbReference type="Gene3D" id="3.30.960.10">
    <property type="entry name" value="eRF1 domain 1"/>
    <property type="match status" value="1"/>
</dbReference>
<dbReference type="Gene3D" id="3.30.420.60">
    <property type="entry name" value="eRF1 domain 2"/>
    <property type="match status" value="1"/>
</dbReference>
<dbReference type="InterPro" id="IPR042226">
    <property type="entry name" value="eFR1_2_sf"/>
</dbReference>
<dbReference type="InterPro" id="IPR005140">
    <property type="entry name" value="eRF1_1_Pelota"/>
</dbReference>
<dbReference type="InterPro" id="IPR024049">
    <property type="entry name" value="eRF1_1_sf"/>
</dbReference>
<dbReference type="InterPro" id="IPR005141">
    <property type="entry name" value="eRF1_2"/>
</dbReference>
<dbReference type="InterPro" id="IPR005142">
    <property type="entry name" value="eRF1_3"/>
</dbReference>
<dbReference type="InterPro" id="IPR004403">
    <property type="entry name" value="Peptide_chain-rel_eRF1/aRF1"/>
</dbReference>
<dbReference type="InterPro" id="IPR029064">
    <property type="entry name" value="Ribosomal_eL30-like_sf"/>
</dbReference>
<dbReference type="NCBIfam" id="TIGR03676">
    <property type="entry name" value="aRF1_eRF1"/>
    <property type="match status" value="1"/>
</dbReference>
<dbReference type="PANTHER" id="PTHR10113">
    <property type="entry name" value="PEPTIDE CHAIN RELEASE FACTOR SUBUNIT 1"/>
    <property type="match status" value="1"/>
</dbReference>
<dbReference type="Pfam" id="PF03463">
    <property type="entry name" value="eRF1_1"/>
    <property type="match status" value="1"/>
</dbReference>
<dbReference type="Pfam" id="PF03464">
    <property type="entry name" value="eRF1_2"/>
    <property type="match status" value="1"/>
</dbReference>
<dbReference type="Pfam" id="PF03465">
    <property type="entry name" value="eRF1_3"/>
    <property type="match status" value="1"/>
</dbReference>
<dbReference type="SMART" id="SM01194">
    <property type="entry name" value="eRF1_1"/>
    <property type="match status" value="1"/>
</dbReference>
<dbReference type="SUPFAM" id="SSF55315">
    <property type="entry name" value="L30e-like"/>
    <property type="match status" value="1"/>
</dbReference>
<dbReference type="SUPFAM" id="SSF55481">
    <property type="entry name" value="N-terminal domain of eukaryotic peptide chain release factor subunit 1, ERF1"/>
    <property type="match status" value="1"/>
</dbReference>
<dbReference type="SUPFAM" id="SSF53137">
    <property type="entry name" value="Translational machinery components"/>
    <property type="match status" value="1"/>
</dbReference>
<reference key="1">
    <citation type="journal article" date="2005" name="Gene">
        <title>Newly sequenced eRF1s from ciliates: the diversity of stop codon usage and the molecular surfaces that are important for stop codon interactions.</title>
        <authorList>
            <person name="Kim O.T.P."/>
            <person name="Yura K."/>
            <person name="Go N."/>
            <person name="Harumoto T."/>
        </authorList>
    </citation>
    <scope>NUCLEOTIDE SEQUENCE [MRNA]</scope>
</reference>
<protein>
    <recommendedName>
        <fullName>Eukaryotic peptide chain release factor subunit 1</fullName>
        <shortName>Eukaryotic release factor 1</shortName>
        <shortName>eRF1</shortName>
    </recommendedName>
</protein>
<sequence>MDVEQEDAIKGWKIRRLIEYLEKAKGNGTSLISLIIPPKEQISLINQKLTDAHGRAQNIKSKAVQKAVQDAIISTKQKLSVIKQIPPNGLILYCGKFIGEDEKTEKQILEVLEPLRAINTTFFLCENTFYTQPLRDMLQEQDKFGFIIMDGNGSLFGTLQGNAREILHKFDVDLPKKHGRGGQSALRFARLRLEKRHNYMKKVAEVAINCFIQNDRVNVLGIVLAGAAEFKNELAANEYLDQRIRAKVVTIIDVNYGGENGFNQAIELSQVQLQNVKFIKEKNLITKLFEEVAQNSITVCYGLTDTMKALEMGAVETLVIWENLEFIWFKLKNPVTKEESTVVLSPQQATEKNHFQDEANQCELNIVERFALTEWLIDNYKNYGARLEFVTDRSQEGSQFVKGFGGICGFLRYEVNFEKMEFQEEEGYLDPDEDFL</sequence>
<gene>
    <name type="primary">eRF1</name>
</gene>